<gene>
    <name evidence="1" type="primary">tig</name>
    <name type="ordered locus">ECS88_0433</name>
</gene>
<accession>B7MD95</accession>
<organism>
    <name type="scientific">Escherichia coli O45:K1 (strain S88 / ExPEC)</name>
    <dbReference type="NCBI Taxonomy" id="585035"/>
    <lineage>
        <taxon>Bacteria</taxon>
        <taxon>Pseudomonadati</taxon>
        <taxon>Pseudomonadota</taxon>
        <taxon>Gammaproteobacteria</taxon>
        <taxon>Enterobacterales</taxon>
        <taxon>Enterobacteriaceae</taxon>
        <taxon>Escherichia</taxon>
    </lineage>
</organism>
<evidence type="ECO:0000255" key="1">
    <source>
        <dbReference type="HAMAP-Rule" id="MF_00303"/>
    </source>
</evidence>
<reference key="1">
    <citation type="journal article" date="2009" name="PLoS Genet.">
        <title>Organised genome dynamics in the Escherichia coli species results in highly diverse adaptive paths.</title>
        <authorList>
            <person name="Touchon M."/>
            <person name="Hoede C."/>
            <person name="Tenaillon O."/>
            <person name="Barbe V."/>
            <person name="Baeriswyl S."/>
            <person name="Bidet P."/>
            <person name="Bingen E."/>
            <person name="Bonacorsi S."/>
            <person name="Bouchier C."/>
            <person name="Bouvet O."/>
            <person name="Calteau A."/>
            <person name="Chiapello H."/>
            <person name="Clermont O."/>
            <person name="Cruveiller S."/>
            <person name="Danchin A."/>
            <person name="Diard M."/>
            <person name="Dossat C."/>
            <person name="Karoui M.E."/>
            <person name="Frapy E."/>
            <person name="Garry L."/>
            <person name="Ghigo J.M."/>
            <person name="Gilles A.M."/>
            <person name="Johnson J."/>
            <person name="Le Bouguenec C."/>
            <person name="Lescat M."/>
            <person name="Mangenot S."/>
            <person name="Martinez-Jehanne V."/>
            <person name="Matic I."/>
            <person name="Nassif X."/>
            <person name="Oztas S."/>
            <person name="Petit M.A."/>
            <person name="Pichon C."/>
            <person name="Rouy Z."/>
            <person name="Ruf C.S."/>
            <person name="Schneider D."/>
            <person name="Tourret J."/>
            <person name="Vacherie B."/>
            <person name="Vallenet D."/>
            <person name="Medigue C."/>
            <person name="Rocha E.P.C."/>
            <person name="Denamur E."/>
        </authorList>
    </citation>
    <scope>NUCLEOTIDE SEQUENCE [LARGE SCALE GENOMIC DNA]</scope>
    <source>
        <strain>S88 / ExPEC</strain>
    </source>
</reference>
<feature type="chain" id="PRO_1000119515" description="Trigger factor">
    <location>
        <begin position="1"/>
        <end position="429"/>
    </location>
</feature>
<feature type="domain" description="PPIase FKBP-type" evidence="1">
    <location>
        <begin position="161"/>
        <end position="246"/>
    </location>
</feature>
<sequence>MQVSVETTQGLGRRVTITIAADSIETAVKSELVNVAKKVRIDGFRKGKVPMNIVAQRYGASVRQDVLGDLMSRNFIDAIIKEKINPAGAPTYVPGEYKLGEDFTYSVEFEVYPEVELQGLEAIEVEKPIVEVTDADVDGMLDTLRKQQATWKEKDGAVEAEDRVTIDFTGSVDGEEFEGGKASDFVLAMGQGRMIPGFEDGIKGHKAGEEFTIDVTFPEEYHAENLKGKAAKFAINLKKVEERELPELTAEFIKRFGVEDGSVEGLRAEVRKNMERELKSAIRNRVKSQAIEGLVKANDIDVPAALIDSEIDVLRRQAAQRFGGNEKQALELPRELFEEQAKRRVVVGLLLGEVIRTNELKADEERVKGLIEEMASAYEDPKEVIEFYSKNKELMDNMRNVALEEQAVEAVLAKAKVTEKETTFNELMN</sequence>
<comment type="function">
    <text evidence="1">Involved in protein export. Acts as a chaperone by maintaining the newly synthesized protein in an open conformation. Functions as a peptidyl-prolyl cis-trans isomerase.</text>
</comment>
<comment type="catalytic activity">
    <reaction evidence="1">
        <text>[protein]-peptidylproline (omega=180) = [protein]-peptidylproline (omega=0)</text>
        <dbReference type="Rhea" id="RHEA:16237"/>
        <dbReference type="Rhea" id="RHEA-COMP:10747"/>
        <dbReference type="Rhea" id="RHEA-COMP:10748"/>
        <dbReference type="ChEBI" id="CHEBI:83833"/>
        <dbReference type="ChEBI" id="CHEBI:83834"/>
        <dbReference type="EC" id="5.2.1.8"/>
    </reaction>
</comment>
<comment type="subunit">
    <text evidence="1">Homodimer and monomer. In vivo most of the ribosomes are in complex with monomeric TF. Uncomplexed TF, however, is in a monomer-dimer equilibrium with approximately two thirds of TF existing in a dimeric state.</text>
</comment>
<comment type="subcellular location">
    <subcellularLocation>
        <location>Cytoplasm</location>
    </subcellularLocation>
    <text evidence="1">About half TF is bound to the ribosome near the polypeptide exit tunnel while the other half is free in the cytoplasm.</text>
</comment>
<comment type="domain">
    <text evidence="1">Consists of 3 domains; the N-terminus binds the ribosome, the middle domain has PPIase activity, while the C-terminus has intrinsic chaperone activity on its own.</text>
</comment>
<comment type="similarity">
    <text evidence="1">Belongs to the FKBP-type PPIase family. Tig subfamily.</text>
</comment>
<dbReference type="EC" id="5.2.1.8" evidence="1"/>
<dbReference type="EMBL" id="CU928161">
    <property type="protein sequence ID" value="CAR01780.1"/>
    <property type="molecule type" value="Genomic_DNA"/>
</dbReference>
<dbReference type="RefSeq" id="WP_001198385.1">
    <property type="nucleotide sequence ID" value="NC_011742.1"/>
</dbReference>
<dbReference type="SMR" id="B7MD95"/>
<dbReference type="KEGG" id="ecz:ECS88_0433"/>
<dbReference type="HOGENOM" id="CLU_033058_2_0_6"/>
<dbReference type="Proteomes" id="UP000000747">
    <property type="component" value="Chromosome"/>
</dbReference>
<dbReference type="GO" id="GO:0005737">
    <property type="term" value="C:cytoplasm"/>
    <property type="evidence" value="ECO:0007669"/>
    <property type="project" value="UniProtKB-SubCell"/>
</dbReference>
<dbReference type="GO" id="GO:0003755">
    <property type="term" value="F:peptidyl-prolyl cis-trans isomerase activity"/>
    <property type="evidence" value="ECO:0007669"/>
    <property type="project" value="UniProtKB-UniRule"/>
</dbReference>
<dbReference type="GO" id="GO:0044183">
    <property type="term" value="F:protein folding chaperone"/>
    <property type="evidence" value="ECO:0007669"/>
    <property type="project" value="TreeGrafter"/>
</dbReference>
<dbReference type="GO" id="GO:0043022">
    <property type="term" value="F:ribosome binding"/>
    <property type="evidence" value="ECO:0007669"/>
    <property type="project" value="TreeGrafter"/>
</dbReference>
<dbReference type="GO" id="GO:0051083">
    <property type="term" value="P:'de novo' cotranslational protein folding"/>
    <property type="evidence" value="ECO:0007669"/>
    <property type="project" value="TreeGrafter"/>
</dbReference>
<dbReference type="GO" id="GO:0051301">
    <property type="term" value="P:cell division"/>
    <property type="evidence" value="ECO:0007669"/>
    <property type="project" value="UniProtKB-KW"/>
</dbReference>
<dbReference type="GO" id="GO:0061077">
    <property type="term" value="P:chaperone-mediated protein folding"/>
    <property type="evidence" value="ECO:0007669"/>
    <property type="project" value="TreeGrafter"/>
</dbReference>
<dbReference type="GO" id="GO:0015031">
    <property type="term" value="P:protein transport"/>
    <property type="evidence" value="ECO:0007669"/>
    <property type="project" value="UniProtKB-UniRule"/>
</dbReference>
<dbReference type="GO" id="GO:0043335">
    <property type="term" value="P:protein unfolding"/>
    <property type="evidence" value="ECO:0007669"/>
    <property type="project" value="TreeGrafter"/>
</dbReference>
<dbReference type="FunFam" id="1.10.3120.10:FF:000001">
    <property type="entry name" value="Trigger factor"/>
    <property type="match status" value="1"/>
</dbReference>
<dbReference type="FunFam" id="3.10.50.40:FF:000001">
    <property type="entry name" value="Trigger factor"/>
    <property type="match status" value="1"/>
</dbReference>
<dbReference type="FunFam" id="3.30.70.1050:FF:000001">
    <property type="entry name" value="Trigger factor"/>
    <property type="match status" value="1"/>
</dbReference>
<dbReference type="Gene3D" id="3.10.50.40">
    <property type="match status" value="1"/>
</dbReference>
<dbReference type="Gene3D" id="3.30.70.1050">
    <property type="entry name" value="Trigger factor ribosome-binding domain"/>
    <property type="match status" value="1"/>
</dbReference>
<dbReference type="Gene3D" id="1.10.3120.10">
    <property type="entry name" value="Trigger factor, C-terminal domain"/>
    <property type="match status" value="1"/>
</dbReference>
<dbReference type="HAMAP" id="MF_00303">
    <property type="entry name" value="Trigger_factor_Tig"/>
    <property type="match status" value="1"/>
</dbReference>
<dbReference type="InterPro" id="IPR046357">
    <property type="entry name" value="PPIase_dom_sf"/>
</dbReference>
<dbReference type="InterPro" id="IPR001179">
    <property type="entry name" value="PPIase_FKBP_dom"/>
</dbReference>
<dbReference type="InterPro" id="IPR005215">
    <property type="entry name" value="Trig_fac"/>
</dbReference>
<dbReference type="InterPro" id="IPR008880">
    <property type="entry name" value="Trigger_fac_C"/>
</dbReference>
<dbReference type="InterPro" id="IPR037041">
    <property type="entry name" value="Trigger_fac_C_sf"/>
</dbReference>
<dbReference type="InterPro" id="IPR008881">
    <property type="entry name" value="Trigger_fac_ribosome-bd_bac"/>
</dbReference>
<dbReference type="InterPro" id="IPR036611">
    <property type="entry name" value="Trigger_fac_ribosome-bd_sf"/>
</dbReference>
<dbReference type="InterPro" id="IPR027304">
    <property type="entry name" value="Trigger_fact/SurA_dom_sf"/>
</dbReference>
<dbReference type="NCBIfam" id="TIGR00115">
    <property type="entry name" value="tig"/>
    <property type="match status" value="1"/>
</dbReference>
<dbReference type="PANTHER" id="PTHR30560">
    <property type="entry name" value="TRIGGER FACTOR CHAPERONE AND PEPTIDYL-PROLYL CIS/TRANS ISOMERASE"/>
    <property type="match status" value="1"/>
</dbReference>
<dbReference type="PANTHER" id="PTHR30560:SF3">
    <property type="entry name" value="TRIGGER FACTOR-LIKE PROTEIN TIG, CHLOROPLASTIC"/>
    <property type="match status" value="1"/>
</dbReference>
<dbReference type="Pfam" id="PF00254">
    <property type="entry name" value="FKBP_C"/>
    <property type="match status" value="1"/>
</dbReference>
<dbReference type="Pfam" id="PF05698">
    <property type="entry name" value="Trigger_C"/>
    <property type="match status" value="1"/>
</dbReference>
<dbReference type="Pfam" id="PF05697">
    <property type="entry name" value="Trigger_N"/>
    <property type="match status" value="1"/>
</dbReference>
<dbReference type="PIRSF" id="PIRSF003095">
    <property type="entry name" value="Trigger_factor"/>
    <property type="match status" value="1"/>
</dbReference>
<dbReference type="SUPFAM" id="SSF54534">
    <property type="entry name" value="FKBP-like"/>
    <property type="match status" value="1"/>
</dbReference>
<dbReference type="SUPFAM" id="SSF109998">
    <property type="entry name" value="Triger factor/SurA peptide-binding domain-like"/>
    <property type="match status" value="1"/>
</dbReference>
<dbReference type="SUPFAM" id="SSF102735">
    <property type="entry name" value="Trigger factor ribosome-binding domain"/>
    <property type="match status" value="1"/>
</dbReference>
<dbReference type="PROSITE" id="PS50059">
    <property type="entry name" value="FKBP_PPIASE"/>
    <property type="match status" value="1"/>
</dbReference>
<protein>
    <recommendedName>
        <fullName evidence="1">Trigger factor</fullName>
        <shortName evidence="1">TF</shortName>
        <ecNumber evidence="1">5.2.1.8</ecNumber>
    </recommendedName>
    <alternativeName>
        <fullName evidence="1">PPIase</fullName>
    </alternativeName>
</protein>
<name>TIG_ECO45</name>
<proteinExistence type="inferred from homology"/>
<keyword id="KW-0131">Cell cycle</keyword>
<keyword id="KW-0132">Cell division</keyword>
<keyword id="KW-0143">Chaperone</keyword>
<keyword id="KW-0963">Cytoplasm</keyword>
<keyword id="KW-0413">Isomerase</keyword>
<keyword id="KW-1185">Reference proteome</keyword>
<keyword id="KW-0697">Rotamase</keyword>